<organism>
    <name type="scientific">Acidiphilium cryptum (strain JF-5)</name>
    <dbReference type="NCBI Taxonomy" id="349163"/>
    <lineage>
        <taxon>Bacteria</taxon>
        <taxon>Pseudomonadati</taxon>
        <taxon>Pseudomonadota</taxon>
        <taxon>Alphaproteobacteria</taxon>
        <taxon>Acetobacterales</taxon>
        <taxon>Acidocellaceae</taxon>
        <taxon>Acidiphilium</taxon>
    </lineage>
</organism>
<name>CHED_ACICJ</name>
<protein>
    <recommendedName>
        <fullName evidence="1">Probable chemoreceptor glutamine deamidase CheD</fullName>
        <ecNumber evidence="1">3.5.1.44</ecNumber>
    </recommendedName>
</protein>
<dbReference type="EC" id="3.5.1.44" evidence="1"/>
<dbReference type="EMBL" id="CP000697">
    <property type="protein sequence ID" value="ABQ31904.1"/>
    <property type="molecule type" value="Genomic_DNA"/>
</dbReference>
<dbReference type="RefSeq" id="WP_007424129.1">
    <property type="nucleotide sequence ID" value="NC_009484.1"/>
</dbReference>
<dbReference type="SMR" id="A5G222"/>
<dbReference type="STRING" id="349163.Acry_2713"/>
<dbReference type="KEGG" id="acr:Acry_2713"/>
<dbReference type="eggNOG" id="COG1871">
    <property type="taxonomic scope" value="Bacteria"/>
</dbReference>
<dbReference type="HOGENOM" id="CLU_087854_0_1_5"/>
<dbReference type="Proteomes" id="UP000000245">
    <property type="component" value="Chromosome"/>
</dbReference>
<dbReference type="GO" id="GO:0050568">
    <property type="term" value="F:protein-glutamine glutaminase activity"/>
    <property type="evidence" value="ECO:0007669"/>
    <property type="project" value="UniProtKB-UniRule"/>
</dbReference>
<dbReference type="GO" id="GO:0006935">
    <property type="term" value="P:chemotaxis"/>
    <property type="evidence" value="ECO:0007669"/>
    <property type="project" value="UniProtKB-UniRule"/>
</dbReference>
<dbReference type="CDD" id="cd16352">
    <property type="entry name" value="CheD"/>
    <property type="match status" value="1"/>
</dbReference>
<dbReference type="Gene3D" id="3.30.1330.200">
    <property type="match status" value="1"/>
</dbReference>
<dbReference type="HAMAP" id="MF_01440">
    <property type="entry name" value="CheD"/>
    <property type="match status" value="1"/>
</dbReference>
<dbReference type="InterPro" id="IPR038592">
    <property type="entry name" value="CheD-like_sf"/>
</dbReference>
<dbReference type="InterPro" id="IPR005659">
    <property type="entry name" value="Chemorcpt_Glu_NH3ase_CheD"/>
</dbReference>
<dbReference type="InterPro" id="IPR011324">
    <property type="entry name" value="Cytotoxic_necrot_fac-like_cat"/>
</dbReference>
<dbReference type="PANTHER" id="PTHR35147:SF3">
    <property type="entry name" value="CHEMORECEPTOR GLUTAMINE DEAMIDASE CHED 1-RELATED"/>
    <property type="match status" value="1"/>
</dbReference>
<dbReference type="PANTHER" id="PTHR35147">
    <property type="entry name" value="CHEMORECEPTOR GLUTAMINE DEAMIDASE CHED-RELATED"/>
    <property type="match status" value="1"/>
</dbReference>
<dbReference type="Pfam" id="PF03975">
    <property type="entry name" value="CheD"/>
    <property type="match status" value="1"/>
</dbReference>
<dbReference type="SUPFAM" id="SSF64438">
    <property type="entry name" value="CNF1/YfiH-like putative cysteine hydrolases"/>
    <property type="match status" value="1"/>
</dbReference>
<comment type="function">
    <text evidence="1">Probably deamidates glutamine residues to glutamate on methyl-accepting chemotaxis receptors (MCPs), playing an important role in chemotaxis.</text>
</comment>
<comment type="catalytic activity">
    <reaction evidence="1">
        <text>L-glutaminyl-[protein] + H2O = L-glutamyl-[protein] + NH4(+)</text>
        <dbReference type="Rhea" id="RHEA:16441"/>
        <dbReference type="Rhea" id="RHEA-COMP:10207"/>
        <dbReference type="Rhea" id="RHEA-COMP:10208"/>
        <dbReference type="ChEBI" id="CHEBI:15377"/>
        <dbReference type="ChEBI" id="CHEBI:28938"/>
        <dbReference type="ChEBI" id="CHEBI:29973"/>
        <dbReference type="ChEBI" id="CHEBI:30011"/>
        <dbReference type="EC" id="3.5.1.44"/>
    </reaction>
</comment>
<comment type="similarity">
    <text evidence="1">Belongs to the CheD family.</text>
</comment>
<accession>A5G222</accession>
<keyword id="KW-0145">Chemotaxis</keyword>
<keyword id="KW-0378">Hydrolase</keyword>
<keyword id="KW-1185">Reference proteome</keyword>
<proteinExistence type="inferred from homology"/>
<feature type="chain" id="PRO_1000184918" description="Probable chemoreceptor glutamine deamidase CheD">
    <location>
        <begin position="1"/>
        <end position="190"/>
    </location>
</feature>
<reference key="1">
    <citation type="submission" date="2007-05" db="EMBL/GenBank/DDBJ databases">
        <title>Complete sequence of chromosome of Acidiphilium cryptum JF-5.</title>
        <authorList>
            <consortium name="US DOE Joint Genome Institute"/>
            <person name="Copeland A."/>
            <person name="Lucas S."/>
            <person name="Lapidus A."/>
            <person name="Barry K."/>
            <person name="Detter J.C."/>
            <person name="Glavina del Rio T."/>
            <person name="Hammon N."/>
            <person name="Israni S."/>
            <person name="Dalin E."/>
            <person name="Tice H."/>
            <person name="Pitluck S."/>
            <person name="Sims D."/>
            <person name="Brettin T."/>
            <person name="Bruce D."/>
            <person name="Han C."/>
            <person name="Schmutz J."/>
            <person name="Larimer F."/>
            <person name="Land M."/>
            <person name="Hauser L."/>
            <person name="Kyrpides N."/>
            <person name="Kim E."/>
            <person name="Magnuson T."/>
            <person name="Richardson P."/>
        </authorList>
    </citation>
    <scope>NUCLEOTIDE SEQUENCE [LARGE SCALE GENOMIC DNA]</scope>
    <source>
        <strain>JF-5</strain>
    </source>
</reference>
<gene>
    <name evidence="1" type="primary">cheD</name>
    <name type="ordered locus">Acry_2713</name>
</gene>
<evidence type="ECO:0000255" key="1">
    <source>
        <dbReference type="HAMAP-Rule" id="MF_01440"/>
    </source>
</evidence>
<sequence>MTPVAAASPDYARRINIVQGEHRVEHDPEAVLCTILGSCVAACLWDPGASVGGMNHFLLPGDAHAQAGGGGAAMRYGAYAMELLINDLLRHGARRDRLKAKLFGGACLMKGLTDIGRLNADFAERFLAAEGIEIVGGSLRGERGRRIQFWPVSGRARQTLLAADQPALLRAEPDLRTLRAPPPSGAVELF</sequence>